<reference key="1">
    <citation type="journal article" date="1998" name="Plant Mol. Biol.">
        <title>Molecular cloning and expression characterization of a rice K+ channel beta subunit.</title>
        <authorList>
            <person name="Fang Z."/>
            <person name="Kamasani U.R."/>
            <person name="Berkowitz G.A."/>
        </authorList>
    </citation>
    <scope>NUCLEOTIDE SEQUENCE [MRNA]</scope>
    <scope>SUBUNIT</scope>
    <scope>TISSUE SPECIFICITY</scope>
    <scope>INDUCTION</scope>
    <source>
        <strain>cv. Nipponbare</strain>
        <tissue>Seedling root</tissue>
    </source>
</reference>
<reference key="2">
    <citation type="journal article" date="2005" name="Nature">
        <title>The map-based sequence of the rice genome.</title>
        <authorList>
            <consortium name="International rice genome sequencing project (IRGSP)"/>
        </authorList>
    </citation>
    <scope>NUCLEOTIDE SEQUENCE [LARGE SCALE GENOMIC DNA]</scope>
    <source>
        <strain>cv. Nipponbare</strain>
    </source>
</reference>
<reference key="3">
    <citation type="journal article" date="2008" name="Nucleic Acids Res.">
        <title>The rice annotation project database (RAP-DB): 2008 update.</title>
        <authorList>
            <consortium name="The rice annotation project (RAP)"/>
        </authorList>
    </citation>
    <scope>GENOME REANNOTATION</scope>
    <source>
        <strain>cv. Nipponbare</strain>
    </source>
</reference>
<reference key="4">
    <citation type="journal article" date="2013" name="Rice">
        <title>Improvement of the Oryza sativa Nipponbare reference genome using next generation sequence and optical map data.</title>
        <authorList>
            <person name="Kawahara Y."/>
            <person name="de la Bastide M."/>
            <person name="Hamilton J.P."/>
            <person name="Kanamori H."/>
            <person name="McCombie W.R."/>
            <person name="Ouyang S."/>
            <person name="Schwartz D.C."/>
            <person name="Tanaka T."/>
            <person name="Wu J."/>
            <person name="Zhou S."/>
            <person name="Childs K.L."/>
            <person name="Davidson R.M."/>
            <person name="Lin H."/>
            <person name="Quesada-Ocampo L."/>
            <person name="Vaillancourt B."/>
            <person name="Sakai H."/>
            <person name="Lee S.S."/>
            <person name="Kim J."/>
            <person name="Numa H."/>
            <person name="Itoh T."/>
            <person name="Buell C.R."/>
            <person name="Matsumoto T."/>
        </authorList>
    </citation>
    <scope>GENOME REANNOTATION</scope>
    <source>
        <strain>cv. Nipponbare</strain>
    </source>
</reference>
<reference key="5">
    <citation type="journal article" date="2005" name="PLoS Biol.">
        <title>The genomes of Oryza sativa: a history of duplications.</title>
        <authorList>
            <person name="Yu J."/>
            <person name="Wang J."/>
            <person name="Lin W."/>
            <person name="Li S."/>
            <person name="Li H."/>
            <person name="Zhou J."/>
            <person name="Ni P."/>
            <person name="Dong W."/>
            <person name="Hu S."/>
            <person name="Zeng C."/>
            <person name="Zhang J."/>
            <person name="Zhang Y."/>
            <person name="Li R."/>
            <person name="Xu Z."/>
            <person name="Li S."/>
            <person name="Li X."/>
            <person name="Zheng H."/>
            <person name="Cong L."/>
            <person name="Lin L."/>
            <person name="Yin J."/>
            <person name="Geng J."/>
            <person name="Li G."/>
            <person name="Shi J."/>
            <person name="Liu J."/>
            <person name="Lv H."/>
            <person name="Li J."/>
            <person name="Wang J."/>
            <person name="Deng Y."/>
            <person name="Ran L."/>
            <person name="Shi X."/>
            <person name="Wang X."/>
            <person name="Wu Q."/>
            <person name="Li C."/>
            <person name="Ren X."/>
            <person name="Wang J."/>
            <person name="Wang X."/>
            <person name="Li D."/>
            <person name="Liu D."/>
            <person name="Zhang X."/>
            <person name="Ji Z."/>
            <person name="Zhao W."/>
            <person name="Sun Y."/>
            <person name="Zhang Z."/>
            <person name="Bao J."/>
            <person name="Han Y."/>
            <person name="Dong L."/>
            <person name="Ji J."/>
            <person name="Chen P."/>
            <person name="Wu S."/>
            <person name="Liu J."/>
            <person name="Xiao Y."/>
            <person name="Bu D."/>
            <person name="Tan J."/>
            <person name="Yang L."/>
            <person name="Ye C."/>
            <person name="Zhang J."/>
            <person name="Xu J."/>
            <person name="Zhou Y."/>
            <person name="Yu Y."/>
            <person name="Zhang B."/>
            <person name="Zhuang S."/>
            <person name="Wei H."/>
            <person name="Liu B."/>
            <person name="Lei M."/>
            <person name="Yu H."/>
            <person name="Li Y."/>
            <person name="Xu H."/>
            <person name="Wei S."/>
            <person name="He X."/>
            <person name="Fang L."/>
            <person name="Zhang Z."/>
            <person name="Zhang Y."/>
            <person name="Huang X."/>
            <person name="Su Z."/>
            <person name="Tong W."/>
            <person name="Li J."/>
            <person name="Tong Z."/>
            <person name="Li S."/>
            <person name="Ye J."/>
            <person name="Wang L."/>
            <person name="Fang L."/>
            <person name="Lei T."/>
            <person name="Chen C.-S."/>
            <person name="Chen H.-C."/>
            <person name="Xu Z."/>
            <person name="Li H."/>
            <person name="Huang H."/>
            <person name="Zhang F."/>
            <person name="Xu H."/>
            <person name="Li N."/>
            <person name="Zhao C."/>
            <person name="Li S."/>
            <person name="Dong L."/>
            <person name="Huang Y."/>
            <person name="Li L."/>
            <person name="Xi Y."/>
            <person name="Qi Q."/>
            <person name="Li W."/>
            <person name="Zhang B."/>
            <person name="Hu W."/>
            <person name="Zhang Y."/>
            <person name="Tian X."/>
            <person name="Jiao Y."/>
            <person name="Liang X."/>
            <person name="Jin J."/>
            <person name="Gao L."/>
            <person name="Zheng W."/>
            <person name="Hao B."/>
            <person name="Liu S.-M."/>
            <person name="Wang W."/>
            <person name="Yuan L."/>
            <person name="Cao M."/>
            <person name="McDermott J."/>
            <person name="Samudrala R."/>
            <person name="Wang J."/>
            <person name="Wong G.K.-S."/>
            <person name="Yang H."/>
        </authorList>
    </citation>
    <scope>NUCLEOTIDE SEQUENCE [LARGE SCALE GENOMIC DNA]</scope>
    <source>
        <strain>cv. Nipponbare</strain>
    </source>
</reference>
<reference key="6">
    <citation type="journal article" date="2003" name="Science">
        <title>Collection, mapping, and annotation of over 28,000 cDNA clones from japonica rice.</title>
        <authorList>
            <consortium name="The rice full-length cDNA consortium"/>
        </authorList>
    </citation>
    <scope>NUCLEOTIDE SEQUENCE [LARGE SCALE MRNA]</scope>
    <source>
        <strain>cv. Nipponbare</strain>
    </source>
</reference>
<dbReference type="EC" id="1.1.1.-" evidence="2"/>
<dbReference type="EMBL" id="U46758">
    <property type="protein sequence ID" value="AAC50046.1"/>
    <property type="status" value="ALT_FRAME"/>
    <property type="molecule type" value="mRNA"/>
</dbReference>
<dbReference type="EMBL" id="AP004028">
    <property type="protein sequence ID" value="BAD21522.1"/>
    <property type="molecule type" value="Genomic_DNA"/>
</dbReference>
<dbReference type="EMBL" id="AP005111">
    <property type="protein sequence ID" value="BAD22023.1"/>
    <property type="molecule type" value="Genomic_DNA"/>
</dbReference>
<dbReference type="EMBL" id="AP008208">
    <property type="protein sequence ID" value="BAF10435.1"/>
    <property type="molecule type" value="Genomic_DNA"/>
</dbReference>
<dbReference type="EMBL" id="AP014958">
    <property type="protein sequence ID" value="BAS81586.1"/>
    <property type="molecule type" value="Genomic_DNA"/>
</dbReference>
<dbReference type="EMBL" id="CM000139">
    <property type="protein sequence ID" value="EEE58046.1"/>
    <property type="molecule type" value="Genomic_DNA"/>
</dbReference>
<dbReference type="EMBL" id="AK072707">
    <property type="protein sequence ID" value="BAG93107.1"/>
    <property type="molecule type" value="mRNA"/>
</dbReference>
<dbReference type="EMBL" id="AK104135">
    <property type="protein sequence ID" value="BAG96444.1"/>
    <property type="molecule type" value="mRNA"/>
</dbReference>
<dbReference type="PIR" id="T03384">
    <property type="entry name" value="T03384"/>
</dbReference>
<dbReference type="RefSeq" id="XP_015626381.1">
    <property type="nucleotide sequence ID" value="XM_015770895.1"/>
</dbReference>
<dbReference type="SMR" id="Q40648"/>
<dbReference type="FunCoup" id="Q40648">
    <property type="interactions" value="1471"/>
</dbReference>
<dbReference type="STRING" id="39947.Q40648"/>
<dbReference type="PaxDb" id="39947-Q40648"/>
<dbReference type="EnsemblPlants" id="Os02t0817500-01">
    <property type="protein sequence ID" value="Os02t0817500-01"/>
    <property type="gene ID" value="Os02g0817500"/>
</dbReference>
<dbReference type="EnsemblPlants" id="Os02t0817500-02">
    <property type="protein sequence ID" value="Os02t0817500-02"/>
    <property type="gene ID" value="Os02g0817500"/>
</dbReference>
<dbReference type="Gramene" id="Os02t0817500-01">
    <property type="protein sequence ID" value="Os02t0817500-01"/>
    <property type="gene ID" value="Os02g0817500"/>
</dbReference>
<dbReference type="Gramene" id="Os02t0817500-02">
    <property type="protein sequence ID" value="Os02t0817500-02"/>
    <property type="gene ID" value="Os02g0817500"/>
</dbReference>
<dbReference type="KEGG" id="dosa:Os02g0817500"/>
<dbReference type="eggNOG" id="KOG1575">
    <property type="taxonomic scope" value="Eukaryota"/>
</dbReference>
<dbReference type="HOGENOM" id="CLU_023205_2_0_1"/>
<dbReference type="InParanoid" id="Q40648"/>
<dbReference type="OMA" id="MWAGPYG"/>
<dbReference type="OrthoDB" id="2310150at2759"/>
<dbReference type="Proteomes" id="UP000000763">
    <property type="component" value="Chromosome 2"/>
</dbReference>
<dbReference type="Proteomes" id="UP000007752">
    <property type="component" value="Chromosome 2"/>
</dbReference>
<dbReference type="Proteomes" id="UP000059680">
    <property type="component" value="Chromosome 2"/>
</dbReference>
<dbReference type="GO" id="GO:0034702">
    <property type="term" value="C:monoatomic ion channel complex"/>
    <property type="evidence" value="ECO:0007669"/>
    <property type="project" value="UniProtKB-KW"/>
</dbReference>
<dbReference type="GO" id="GO:0016491">
    <property type="term" value="F:oxidoreductase activity"/>
    <property type="evidence" value="ECO:0007669"/>
    <property type="project" value="UniProtKB-KW"/>
</dbReference>
<dbReference type="GO" id="GO:0034220">
    <property type="term" value="P:monoatomic ion transmembrane transport"/>
    <property type="evidence" value="ECO:0007669"/>
    <property type="project" value="UniProtKB-KW"/>
</dbReference>
<dbReference type="GO" id="GO:0006813">
    <property type="term" value="P:potassium ion transport"/>
    <property type="evidence" value="ECO:0007669"/>
    <property type="project" value="UniProtKB-KW"/>
</dbReference>
<dbReference type="CDD" id="cd19143">
    <property type="entry name" value="AKR_AKR6C1_2"/>
    <property type="match status" value="1"/>
</dbReference>
<dbReference type="FunFam" id="3.20.20.100:FF:000042">
    <property type="entry name" value="Probable voltage-gated potassium channel subunit beta"/>
    <property type="match status" value="1"/>
</dbReference>
<dbReference type="Gene3D" id="3.20.20.100">
    <property type="entry name" value="NADP-dependent oxidoreductase domain"/>
    <property type="match status" value="1"/>
</dbReference>
<dbReference type="InterPro" id="IPR005399">
    <property type="entry name" value="K_chnl_volt-dep_bsu_KCNAB-rel"/>
</dbReference>
<dbReference type="InterPro" id="IPR023210">
    <property type="entry name" value="NADP_OxRdtase_dom"/>
</dbReference>
<dbReference type="InterPro" id="IPR036812">
    <property type="entry name" value="NADP_OxRdtase_dom_sf"/>
</dbReference>
<dbReference type="PANTHER" id="PTHR43150">
    <property type="entry name" value="HYPERKINETIC, ISOFORM M"/>
    <property type="match status" value="1"/>
</dbReference>
<dbReference type="PANTHER" id="PTHR43150:SF2">
    <property type="entry name" value="HYPERKINETIC, ISOFORM M"/>
    <property type="match status" value="1"/>
</dbReference>
<dbReference type="Pfam" id="PF00248">
    <property type="entry name" value="Aldo_ket_red"/>
    <property type="match status" value="1"/>
</dbReference>
<dbReference type="PRINTS" id="PR01577">
    <property type="entry name" value="KCNABCHANNEL"/>
</dbReference>
<dbReference type="SUPFAM" id="SSF51430">
    <property type="entry name" value="NAD(P)-linked oxidoreductase"/>
    <property type="match status" value="1"/>
</dbReference>
<organism>
    <name type="scientific">Oryza sativa subsp. japonica</name>
    <name type="common">Rice</name>
    <dbReference type="NCBI Taxonomy" id="39947"/>
    <lineage>
        <taxon>Eukaryota</taxon>
        <taxon>Viridiplantae</taxon>
        <taxon>Streptophyta</taxon>
        <taxon>Embryophyta</taxon>
        <taxon>Tracheophyta</taxon>
        <taxon>Spermatophyta</taxon>
        <taxon>Magnoliopsida</taxon>
        <taxon>Liliopsida</taxon>
        <taxon>Poales</taxon>
        <taxon>Poaceae</taxon>
        <taxon>BOP clade</taxon>
        <taxon>Oryzoideae</taxon>
        <taxon>Oryzeae</taxon>
        <taxon>Oryzinae</taxon>
        <taxon>Oryza</taxon>
        <taxon>Oryza sativa</taxon>
    </lineage>
</organism>
<evidence type="ECO:0000250" key="1">
    <source>
        <dbReference type="UniProtKB" id="O23016"/>
    </source>
</evidence>
<evidence type="ECO:0000250" key="2">
    <source>
        <dbReference type="UniProtKB" id="P62483"/>
    </source>
</evidence>
<evidence type="ECO:0000269" key="3">
    <source>
    </source>
</evidence>
<evidence type="ECO:0000305" key="4"/>
<evidence type="ECO:0000305" key="5">
    <source>
    </source>
</evidence>
<protein>
    <recommendedName>
        <fullName>Probable voltage-gated potassium channel subunit beta</fullName>
        <ecNumber evidence="2">1.1.1.-</ecNumber>
    </recommendedName>
    <alternativeName>
        <fullName>K(+) channel subunit beta</fullName>
    </alternativeName>
</protein>
<accession>Q40648</accession>
<accession>A0A0P0VR95</accession>
<accession>Q0DWF3</accession>
<accession>Q6K697</accession>
<gene>
    <name type="primary">KOB1</name>
    <name type="ordered locus">Os02g0817500</name>
    <name type="ordered locus">LOC_Os02g57240</name>
    <name type="ORF">OJ1136_C12.15</name>
    <name type="ORF">P0643F09.35</name>
</gene>
<proteinExistence type="evidence at protein level"/>
<name>KCAB_ORYSJ</name>
<sequence length="328" mass="36449">MQYKNLGRSGLRVSQLSYGAWVTFGNQLDVKEAKALLQACRDAGVNFFDNAEVYANGRAEEIMGQAMRDLGWRRSDVVVSTKLFWGGQGPNDKGLSRKHIVEGLRGSLKRLDMDYVDVVYCHRPDATTPVEETVRAMNWVIDHGMAFYWGTSEWSAQQITEAWSVANRLDLVGPIVEQPEYNLFSRHKVESEFLPLYSTYGLGLTTWSPLASGVLTGKYAKGNIPADSRFALENYKNLANRSLVDDTLRKVNGLKPIASELGVSLAQLAIAWCASNPNVSSVITGATKENQIVENMKALDVIPLLTPEVVDKIEAVVQSKPKRTESYR</sequence>
<comment type="function">
    <text evidence="1">Probable accessory potassium channel protein which modulates the activity of the pore-forming alpha subunit.</text>
</comment>
<comment type="subunit">
    <text evidence="5">Forms heteromultimeric complexes with potassium channel alpha subunits.</text>
</comment>
<comment type="tissue specificity">
    <text evidence="3">Expressed in late-developed leaves with the highest expression in the flag leaf (at protein level).</text>
</comment>
<comment type="induction">
    <text evidence="3">Down-regulated in late-developed leaves when grown on potassium-deficient soil (at protein level).</text>
</comment>
<comment type="miscellaneous">
    <text>In vitro, interacts with the N-terminal part of A.thaliana KAT1, a voltage-gated potassium channel alpha subunit.</text>
</comment>
<comment type="similarity">
    <text evidence="4">Belongs to the shaker potassium channel beta subunit family.</text>
</comment>
<comment type="sequence caution" evidence="4">
    <conflict type="frameshift">
        <sequence resource="EMBL-CDS" id="AAC50046"/>
    </conflict>
</comment>
<feature type="chain" id="PRO_0000148754" description="Probable voltage-gated potassium channel subunit beta">
    <location>
        <begin position="1"/>
        <end position="328"/>
    </location>
</feature>
<feature type="active site" description="Proton donor/acceptor" evidence="2">
    <location>
        <position position="54"/>
    </location>
</feature>
<feature type="binding site" evidence="2">
    <location>
        <position position="21"/>
    </location>
    <ligand>
        <name>NADP(+)</name>
        <dbReference type="ChEBI" id="CHEBI:58349"/>
    </ligand>
</feature>
<feature type="binding site" evidence="2">
    <location>
        <position position="27"/>
    </location>
    <ligand>
        <name>NADP(+)</name>
        <dbReference type="ChEBI" id="CHEBI:58349"/>
    </ligand>
</feature>
<feature type="binding site" evidence="2">
    <location>
        <position position="49"/>
    </location>
    <ligand>
        <name>NADP(+)</name>
        <dbReference type="ChEBI" id="CHEBI:58349"/>
    </ligand>
</feature>
<feature type="binding site" evidence="2">
    <location>
        <position position="152"/>
    </location>
    <ligand>
        <name>NADP(+)</name>
        <dbReference type="ChEBI" id="CHEBI:58349"/>
    </ligand>
</feature>
<feature type="binding site" evidence="2">
    <location>
        <position position="178"/>
    </location>
    <ligand>
        <name>NADP(+)</name>
        <dbReference type="ChEBI" id="CHEBI:58349"/>
    </ligand>
</feature>
<feature type="binding site" evidence="2">
    <location>
        <position position="207"/>
    </location>
    <ligand>
        <name>NADP(+)</name>
        <dbReference type="ChEBI" id="CHEBI:58349"/>
    </ligand>
</feature>
<feature type="binding site" evidence="2">
    <location>
        <position position="208"/>
    </location>
    <ligand>
        <name>NADP(+)</name>
        <dbReference type="ChEBI" id="CHEBI:58349"/>
    </ligand>
</feature>
<feature type="binding site" evidence="2">
    <location>
        <position position="209"/>
    </location>
    <ligand>
        <name>NADP(+)</name>
        <dbReference type="ChEBI" id="CHEBI:58349"/>
    </ligand>
</feature>
<feature type="binding site" evidence="2">
    <location>
        <position position="210"/>
    </location>
    <ligand>
        <name>NADP(+)</name>
        <dbReference type="ChEBI" id="CHEBI:58349"/>
    </ligand>
</feature>
<feature type="binding site" evidence="2">
    <location>
        <position position="211"/>
    </location>
    <ligand>
        <name>NADP(+)</name>
        <dbReference type="ChEBI" id="CHEBI:58349"/>
    </ligand>
</feature>
<feature type="binding site" evidence="2">
    <location>
        <position position="218"/>
    </location>
    <ligand>
        <name>NADP(+)</name>
        <dbReference type="ChEBI" id="CHEBI:58349"/>
    </ligand>
</feature>
<feature type="binding site" evidence="2">
    <location>
        <position position="229"/>
    </location>
    <ligand>
        <name>NADP(+)</name>
        <dbReference type="ChEBI" id="CHEBI:58349"/>
    </ligand>
</feature>
<feature type="binding site" evidence="2">
    <location>
        <position position="285"/>
    </location>
    <ligand>
        <name>NADP(+)</name>
        <dbReference type="ChEBI" id="CHEBI:58349"/>
    </ligand>
</feature>
<feature type="binding site" evidence="2">
    <location>
        <position position="287"/>
    </location>
    <ligand>
        <name>NADP(+)</name>
        <dbReference type="ChEBI" id="CHEBI:58349"/>
    </ligand>
</feature>
<feature type="binding site" evidence="2">
    <location>
        <position position="291"/>
    </location>
    <ligand>
        <name>NADP(+)</name>
        <dbReference type="ChEBI" id="CHEBI:58349"/>
    </ligand>
</feature>
<feature type="binding site" evidence="2">
    <location>
        <position position="294"/>
    </location>
    <ligand>
        <name>NADP(+)</name>
        <dbReference type="ChEBI" id="CHEBI:58349"/>
    </ligand>
</feature>
<feature type="binding site" evidence="2">
    <location>
        <position position="295"/>
    </location>
    <ligand>
        <name>NADP(+)</name>
        <dbReference type="ChEBI" id="CHEBI:58349"/>
    </ligand>
</feature>
<keyword id="KW-0407">Ion channel</keyword>
<keyword id="KW-0406">Ion transport</keyword>
<keyword id="KW-0521">NADP</keyword>
<keyword id="KW-0560">Oxidoreductase</keyword>
<keyword id="KW-0630">Potassium</keyword>
<keyword id="KW-0633">Potassium transport</keyword>
<keyword id="KW-1185">Reference proteome</keyword>
<keyword id="KW-0813">Transport</keyword>
<keyword id="KW-0851">Voltage-gated channel</keyword>